<keyword id="KW-0997">Cell inner membrane</keyword>
<keyword id="KW-1003">Cell membrane</keyword>
<keyword id="KW-0472">Membrane</keyword>
<keyword id="KW-1185">Reference proteome</keyword>
<keyword id="KW-0346">Stress response</keyword>
<keyword id="KW-0812">Transmembrane</keyword>
<keyword id="KW-1133">Transmembrane helix</keyword>
<sequence length="415" mass="46603">MQDLISQVEDLAGIEIDHTTSMVMIFGIIFLTAVVVHIILHWVVLRTFEKRAIASSRLWLQIITQNKLFHRLAFTLQGIIVNIQAVFWLQKGTEAADILTTCAQLWIMMYALLSVFSLLDVILNLAQKFPAASQLPLKGIFQGIKLIGAILVGILMISLLIGQSPAILISGLGAMAAVLMLVFKDPILGLVAGIQLSANDMLKLGDWLEMPKYGADGAVIDIGLTTVKVRNWDNTITTIPTWSLVSDSFKNWSGMSASGGRRIKRSISIDVTSIRFLDEDEMQRLNKAHLLKPYLTSRHQEINEWNRQQGSTESVLNLRRMTNIGTFRAYLNEYLRNHPRIRKDMTLMVRQLAPGDNGLPLEIYAFTNTVVWLEYESIQADIFDHIFAIVEEFGLRLHQSPTGNDIRSLAGAFKQ</sequence>
<organism>
    <name type="scientific">Shigella flexneri</name>
    <dbReference type="NCBI Taxonomy" id="623"/>
    <lineage>
        <taxon>Bacteria</taxon>
        <taxon>Pseudomonadati</taxon>
        <taxon>Pseudomonadota</taxon>
        <taxon>Gammaproteobacteria</taxon>
        <taxon>Enterobacterales</taxon>
        <taxon>Enterobacteriaceae</taxon>
        <taxon>Shigella</taxon>
    </lineage>
</organism>
<name>YBDG_SHIFL</name>
<evidence type="ECO:0000250" key="1">
    <source>
        <dbReference type="UniProtKB" id="P0AAT4"/>
    </source>
</evidence>
<evidence type="ECO:0000255" key="2"/>
<evidence type="ECO:0000305" key="3"/>
<proteinExistence type="inferred from homology"/>
<comment type="function">
    <text evidence="1">Functions as a component of a mechanosensing system that transmits signals triggered by external osmotic changes to intracellular factors.</text>
</comment>
<comment type="subunit">
    <text evidence="1">Homoheptamer.</text>
</comment>
<comment type="subcellular location">
    <subcellularLocation>
        <location evidence="1">Cell inner membrane</location>
        <topology evidence="2">Multi-pass membrane protein</topology>
    </subcellularLocation>
</comment>
<comment type="similarity">
    <text evidence="3">Belongs to the MscS (TC 1.A.23) family.</text>
</comment>
<gene>
    <name type="primary">ybdG</name>
    <name type="ordered locus">SF0483</name>
    <name type="ordered locus">S0492</name>
</gene>
<protein>
    <recommendedName>
        <fullName evidence="1">Mechanosensing system component YbdG</fullName>
    </recommendedName>
    <alternativeName>
        <fullName evidence="1">Mechanosensitive channel homolog YbdG</fullName>
    </alternativeName>
</protein>
<feature type="chain" id="PRO_0000168668" description="Mechanosensing system component YbdG">
    <location>
        <begin position="1"/>
        <end position="415"/>
    </location>
</feature>
<feature type="topological domain" description="Periplasmic" evidence="3">
    <location>
        <begin position="1"/>
        <end position="24"/>
    </location>
</feature>
<feature type="transmembrane region" description="Helical" evidence="2">
    <location>
        <begin position="25"/>
        <end position="45"/>
    </location>
</feature>
<feature type="topological domain" description="Cytoplasmic" evidence="3">
    <location>
        <begin position="46"/>
        <end position="67"/>
    </location>
</feature>
<feature type="transmembrane region" description="Helical" evidence="2">
    <location>
        <begin position="68"/>
        <end position="88"/>
    </location>
</feature>
<feature type="topological domain" description="Periplasmic" evidence="3">
    <location>
        <begin position="89"/>
        <end position="104"/>
    </location>
</feature>
<feature type="transmembrane region" description="Helical" evidence="2">
    <location>
        <begin position="105"/>
        <end position="125"/>
    </location>
</feature>
<feature type="topological domain" description="Cytoplasmic" evidence="3">
    <location>
        <begin position="126"/>
        <end position="148"/>
    </location>
</feature>
<feature type="transmembrane region" description="Helical" evidence="2">
    <location>
        <begin position="149"/>
        <end position="169"/>
    </location>
</feature>
<feature type="topological domain" description="Periplasmic" evidence="3">
    <location>
        <begin position="170"/>
        <end position="173"/>
    </location>
</feature>
<feature type="transmembrane region" description="Helical" evidence="2">
    <location>
        <begin position="174"/>
        <end position="194"/>
    </location>
</feature>
<feature type="topological domain" description="Cytoplasmic" evidence="1">
    <location>
        <begin position="195"/>
        <end position="415"/>
    </location>
</feature>
<reference key="1">
    <citation type="journal article" date="2002" name="Nucleic Acids Res.">
        <title>Genome sequence of Shigella flexneri 2a: insights into pathogenicity through comparison with genomes of Escherichia coli K12 and O157.</title>
        <authorList>
            <person name="Jin Q."/>
            <person name="Yuan Z."/>
            <person name="Xu J."/>
            <person name="Wang Y."/>
            <person name="Shen Y."/>
            <person name="Lu W."/>
            <person name="Wang J."/>
            <person name="Liu H."/>
            <person name="Yang J."/>
            <person name="Yang F."/>
            <person name="Zhang X."/>
            <person name="Zhang J."/>
            <person name="Yang G."/>
            <person name="Wu H."/>
            <person name="Qu D."/>
            <person name="Dong J."/>
            <person name="Sun L."/>
            <person name="Xue Y."/>
            <person name="Zhao A."/>
            <person name="Gao Y."/>
            <person name="Zhu J."/>
            <person name="Kan B."/>
            <person name="Ding K."/>
            <person name="Chen S."/>
            <person name="Cheng H."/>
            <person name="Yao Z."/>
            <person name="He B."/>
            <person name="Chen R."/>
            <person name="Ma D."/>
            <person name="Qiang B."/>
            <person name="Wen Y."/>
            <person name="Hou Y."/>
            <person name="Yu J."/>
        </authorList>
    </citation>
    <scope>NUCLEOTIDE SEQUENCE [LARGE SCALE GENOMIC DNA]</scope>
    <source>
        <strain>301 / Serotype 2a</strain>
    </source>
</reference>
<reference key="2">
    <citation type="journal article" date="2003" name="Infect. Immun.">
        <title>Complete genome sequence and comparative genomics of Shigella flexneri serotype 2a strain 2457T.</title>
        <authorList>
            <person name="Wei J."/>
            <person name="Goldberg M.B."/>
            <person name="Burland V."/>
            <person name="Venkatesan M.M."/>
            <person name="Deng W."/>
            <person name="Fournier G."/>
            <person name="Mayhew G.F."/>
            <person name="Plunkett G. III"/>
            <person name="Rose D.J."/>
            <person name="Darling A."/>
            <person name="Mau B."/>
            <person name="Perna N.T."/>
            <person name="Payne S.M."/>
            <person name="Runyen-Janecky L.J."/>
            <person name="Zhou S."/>
            <person name="Schwartz D.C."/>
            <person name="Blattner F.R."/>
        </authorList>
    </citation>
    <scope>NUCLEOTIDE SEQUENCE [LARGE SCALE GENOMIC DNA]</scope>
    <source>
        <strain>ATCC 700930 / 2457T / Serotype 2a</strain>
    </source>
</reference>
<accession>P0AAT5</accession>
<accession>P39455</accession>
<accession>P77602</accession>
<dbReference type="EMBL" id="AE005674">
    <property type="protein sequence ID" value="AAN42134.2"/>
    <property type="molecule type" value="Genomic_DNA"/>
</dbReference>
<dbReference type="EMBL" id="AE014073">
    <property type="protein sequence ID" value="AAP16008.1"/>
    <property type="molecule type" value="Genomic_DNA"/>
</dbReference>
<dbReference type="RefSeq" id="NP_706427.2">
    <property type="nucleotide sequence ID" value="NC_004337.2"/>
</dbReference>
<dbReference type="RefSeq" id="WP_001153148.1">
    <property type="nucleotide sequence ID" value="NZ_WPGW01000127.1"/>
</dbReference>
<dbReference type="SMR" id="P0AAT5"/>
<dbReference type="STRING" id="198214.SF0483"/>
<dbReference type="PaxDb" id="198214-SF0483"/>
<dbReference type="GeneID" id="1023355"/>
<dbReference type="GeneID" id="93776911"/>
<dbReference type="KEGG" id="sfl:SF0483"/>
<dbReference type="KEGG" id="sfx:S0492"/>
<dbReference type="PATRIC" id="fig|198214.7.peg.555"/>
<dbReference type="HOGENOM" id="CLU_045354_1_0_6"/>
<dbReference type="Proteomes" id="UP000001006">
    <property type="component" value="Chromosome"/>
</dbReference>
<dbReference type="Proteomes" id="UP000002673">
    <property type="component" value="Chromosome"/>
</dbReference>
<dbReference type="GO" id="GO:0005886">
    <property type="term" value="C:plasma membrane"/>
    <property type="evidence" value="ECO:0007669"/>
    <property type="project" value="UniProtKB-SubCell"/>
</dbReference>
<dbReference type="GO" id="GO:0008381">
    <property type="term" value="F:mechanosensitive monoatomic ion channel activity"/>
    <property type="evidence" value="ECO:0007669"/>
    <property type="project" value="InterPro"/>
</dbReference>
<dbReference type="GO" id="GO:0071470">
    <property type="term" value="P:cellular response to osmotic stress"/>
    <property type="evidence" value="ECO:0007669"/>
    <property type="project" value="InterPro"/>
</dbReference>
<dbReference type="FunFam" id="2.30.30.60:FF:000002">
    <property type="entry name" value="Mechanosensitive ion channel family protein"/>
    <property type="match status" value="1"/>
</dbReference>
<dbReference type="Gene3D" id="2.30.30.60">
    <property type="match status" value="1"/>
</dbReference>
<dbReference type="InterPro" id="IPR010920">
    <property type="entry name" value="LSM_dom_sf"/>
</dbReference>
<dbReference type="InterPro" id="IPR049278">
    <property type="entry name" value="MS_channel_C"/>
</dbReference>
<dbReference type="InterPro" id="IPR023408">
    <property type="entry name" value="MscS_beta-dom_sf"/>
</dbReference>
<dbReference type="InterPro" id="IPR006685">
    <property type="entry name" value="MscS_channel_2nd"/>
</dbReference>
<dbReference type="InterPro" id="IPR011066">
    <property type="entry name" value="MscS_channel_C_sf"/>
</dbReference>
<dbReference type="InterPro" id="IPR030192">
    <property type="entry name" value="YbdG"/>
</dbReference>
<dbReference type="PANTHER" id="PTHR30414">
    <property type="entry name" value="MINICONDUCTANCE MECHANOSENSITIVE CHANNEL YBDG"/>
    <property type="match status" value="1"/>
</dbReference>
<dbReference type="PANTHER" id="PTHR30414:SF0">
    <property type="entry name" value="MINICONDUCTANCE MECHANOSENSITIVE CHANNEL YBDG"/>
    <property type="match status" value="1"/>
</dbReference>
<dbReference type="Pfam" id="PF00924">
    <property type="entry name" value="MS_channel_2nd"/>
    <property type="match status" value="1"/>
</dbReference>
<dbReference type="Pfam" id="PF21082">
    <property type="entry name" value="MS_channel_3rd"/>
    <property type="match status" value="1"/>
</dbReference>
<dbReference type="SUPFAM" id="SSF82689">
    <property type="entry name" value="Mechanosensitive channel protein MscS (YggB), C-terminal domain"/>
    <property type="match status" value="1"/>
</dbReference>
<dbReference type="SUPFAM" id="SSF50182">
    <property type="entry name" value="Sm-like ribonucleoproteins"/>
    <property type="match status" value="1"/>
</dbReference>